<protein>
    <recommendedName>
        <fullName evidence="1">Chaperonin GroEL 1</fullName>
        <ecNumber evidence="1">5.6.1.7</ecNumber>
    </recommendedName>
    <alternativeName>
        <fullName evidence="1">60 kDa chaperonin 1</fullName>
    </alternativeName>
    <alternativeName>
        <fullName evidence="1">Chaperonin-60 1</fullName>
        <shortName evidence="1">Cpn60 1</shortName>
    </alternativeName>
</protein>
<feature type="initiator methionine" description="Removed" evidence="3 4">
    <location>
        <position position="1"/>
    </location>
</feature>
<feature type="chain" id="PRO_0000063512" description="Chaperonin GroEL 1">
    <location>
        <begin position="2"/>
        <end position="547"/>
    </location>
</feature>
<feature type="region of interest" description="Disordered" evidence="2">
    <location>
        <begin position="525"/>
        <end position="547"/>
    </location>
</feature>
<feature type="compositionally biased region" description="Gly residues" evidence="2">
    <location>
        <begin position="533"/>
        <end position="547"/>
    </location>
</feature>
<feature type="binding site" evidence="1">
    <location>
        <begin position="30"/>
        <end position="33"/>
    </location>
    <ligand>
        <name>ATP</name>
        <dbReference type="ChEBI" id="CHEBI:30616"/>
    </ligand>
</feature>
<feature type="binding site" evidence="1">
    <location>
        <position position="51"/>
    </location>
    <ligand>
        <name>ATP</name>
        <dbReference type="ChEBI" id="CHEBI:30616"/>
    </ligand>
</feature>
<feature type="binding site" evidence="1">
    <location>
        <begin position="87"/>
        <end position="91"/>
    </location>
    <ligand>
        <name>ATP</name>
        <dbReference type="ChEBI" id="CHEBI:30616"/>
    </ligand>
</feature>
<feature type="binding site" evidence="1">
    <location>
        <position position="415"/>
    </location>
    <ligand>
        <name>ATP</name>
        <dbReference type="ChEBI" id="CHEBI:30616"/>
    </ligand>
</feature>
<feature type="binding site" evidence="1">
    <location>
        <position position="496"/>
    </location>
    <ligand>
        <name>ATP</name>
        <dbReference type="ChEBI" id="CHEBI:30616"/>
    </ligand>
</feature>
<keyword id="KW-0067">ATP-binding</keyword>
<keyword id="KW-0143">Chaperone</keyword>
<keyword id="KW-0963">Cytoplasm</keyword>
<keyword id="KW-0903">Direct protein sequencing</keyword>
<keyword id="KW-0413">Isomerase</keyword>
<keyword id="KW-0547">Nucleotide-binding</keyword>
<keyword id="KW-0346">Stress response</keyword>
<proteinExistence type="evidence at protein level"/>
<dbReference type="EC" id="5.6.1.7" evidence="1"/>
<dbReference type="EMBL" id="U37369">
    <property type="protein sequence ID" value="AAB41336.1"/>
    <property type="molecule type" value="Genomic_DNA"/>
</dbReference>
<dbReference type="RefSeq" id="WP_002719474.1">
    <property type="nucleotide sequence ID" value="NZ_BJXO01000014.1"/>
</dbReference>
<dbReference type="SMR" id="P20110"/>
<dbReference type="GeneID" id="67446081"/>
<dbReference type="OMA" id="TDTDKME"/>
<dbReference type="GO" id="GO:0005737">
    <property type="term" value="C:cytoplasm"/>
    <property type="evidence" value="ECO:0007669"/>
    <property type="project" value="UniProtKB-SubCell"/>
</dbReference>
<dbReference type="GO" id="GO:0005524">
    <property type="term" value="F:ATP binding"/>
    <property type="evidence" value="ECO:0007669"/>
    <property type="project" value="UniProtKB-UniRule"/>
</dbReference>
<dbReference type="GO" id="GO:0140662">
    <property type="term" value="F:ATP-dependent protein folding chaperone"/>
    <property type="evidence" value="ECO:0007669"/>
    <property type="project" value="InterPro"/>
</dbReference>
<dbReference type="GO" id="GO:0016853">
    <property type="term" value="F:isomerase activity"/>
    <property type="evidence" value="ECO:0007669"/>
    <property type="project" value="UniProtKB-KW"/>
</dbReference>
<dbReference type="GO" id="GO:0051082">
    <property type="term" value="F:unfolded protein binding"/>
    <property type="evidence" value="ECO:0007669"/>
    <property type="project" value="UniProtKB-UniRule"/>
</dbReference>
<dbReference type="GO" id="GO:0042026">
    <property type="term" value="P:protein refolding"/>
    <property type="evidence" value="ECO:0007669"/>
    <property type="project" value="UniProtKB-UniRule"/>
</dbReference>
<dbReference type="CDD" id="cd03344">
    <property type="entry name" value="GroEL"/>
    <property type="match status" value="1"/>
</dbReference>
<dbReference type="FunFam" id="1.10.560.10:FF:000001">
    <property type="entry name" value="60 kDa chaperonin"/>
    <property type="match status" value="1"/>
</dbReference>
<dbReference type="FunFam" id="3.50.7.10:FF:000001">
    <property type="entry name" value="60 kDa chaperonin"/>
    <property type="match status" value="1"/>
</dbReference>
<dbReference type="Gene3D" id="3.50.7.10">
    <property type="entry name" value="GroEL"/>
    <property type="match status" value="1"/>
</dbReference>
<dbReference type="Gene3D" id="1.10.560.10">
    <property type="entry name" value="GroEL-like equatorial domain"/>
    <property type="match status" value="1"/>
</dbReference>
<dbReference type="Gene3D" id="3.30.260.10">
    <property type="entry name" value="TCP-1-like chaperonin intermediate domain"/>
    <property type="match status" value="1"/>
</dbReference>
<dbReference type="HAMAP" id="MF_00600">
    <property type="entry name" value="CH60"/>
    <property type="match status" value="1"/>
</dbReference>
<dbReference type="InterPro" id="IPR018370">
    <property type="entry name" value="Chaperonin_Cpn60_CS"/>
</dbReference>
<dbReference type="InterPro" id="IPR001844">
    <property type="entry name" value="Cpn60/GroEL"/>
</dbReference>
<dbReference type="InterPro" id="IPR002423">
    <property type="entry name" value="Cpn60/GroEL/TCP-1"/>
</dbReference>
<dbReference type="InterPro" id="IPR027409">
    <property type="entry name" value="GroEL-like_apical_dom_sf"/>
</dbReference>
<dbReference type="InterPro" id="IPR027413">
    <property type="entry name" value="GROEL-like_equatorial_sf"/>
</dbReference>
<dbReference type="InterPro" id="IPR027410">
    <property type="entry name" value="TCP-1-like_intermed_sf"/>
</dbReference>
<dbReference type="NCBIfam" id="TIGR02348">
    <property type="entry name" value="GroEL"/>
    <property type="match status" value="1"/>
</dbReference>
<dbReference type="NCBIfam" id="NF000592">
    <property type="entry name" value="PRK00013.1"/>
    <property type="match status" value="1"/>
</dbReference>
<dbReference type="NCBIfam" id="NF009487">
    <property type="entry name" value="PRK12849.1"/>
    <property type="match status" value="1"/>
</dbReference>
<dbReference type="NCBIfam" id="NF009488">
    <property type="entry name" value="PRK12850.1"/>
    <property type="match status" value="1"/>
</dbReference>
<dbReference type="NCBIfam" id="NF009489">
    <property type="entry name" value="PRK12851.1"/>
    <property type="match status" value="1"/>
</dbReference>
<dbReference type="PANTHER" id="PTHR45633">
    <property type="entry name" value="60 KDA HEAT SHOCK PROTEIN, MITOCHONDRIAL"/>
    <property type="match status" value="1"/>
</dbReference>
<dbReference type="Pfam" id="PF00118">
    <property type="entry name" value="Cpn60_TCP1"/>
    <property type="match status" value="1"/>
</dbReference>
<dbReference type="PRINTS" id="PR00298">
    <property type="entry name" value="CHAPERONIN60"/>
</dbReference>
<dbReference type="SUPFAM" id="SSF52029">
    <property type="entry name" value="GroEL apical domain-like"/>
    <property type="match status" value="1"/>
</dbReference>
<dbReference type="SUPFAM" id="SSF48592">
    <property type="entry name" value="GroEL equatorial domain-like"/>
    <property type="match status" value="1"/>
</dbReference>
<dbReference type="SUPFAM" id="SSF54849">
    <property type="entry name" value="GroEL-intermediate domain like"/>
    <property type="match status" value="1"/>
</dbReference>
<dbReference type="PROSITE" id="PS00296">
    <property type="entry name" value="CHAPERONINS_CPN60"/>
    <property type="match status" value="1"/>
</dbReference>
<sequence>MAAKDVKFDTDARDRMLRGVNILADAVKVTLGPKGRNVVIDKSFGAPRITKDGVSVAKEIELSDKFENMGAQMVKEVASRTNDEAGDGTTTATVLAQAIIKEGLKAVAAGMNPMDLKRGIDLATSKVVEAIKAAARPVNDSHEVAQVGTISANGEAQIGRFIADAMQKVGNEGVITVEENKGLETEVEVVEGMQFDRGYLSPYFVTNADKMTAELDDVYILLHEKKLSSLQPMVPLLEAVIQSQKPLLIIAEDVEGEALATLVVNKLRGGLKIAAVKAPGFGDRRKAMLQDIAILTGGQVISEDLGMKLENVTIDMLGRAKKISINKDNTTIVDGNGDKAEIDARVAQIRNQIEETSSDYDREKLQERVAKLAGGVAVIRVGGMTEVEVKERKDRVDDALNATRAAVQEGIVVGGGVALIQGGKALDGLTGENPDQNAGITIVRRALEAPLRQIAQNAGVDGSVVAGKVRESNEKSFGFNAQTEEYGDMFKFGVIDPAKVVRTALEDAASVASLLITTEAMIADKPEPKSPAGGPGMGGMGGMDGMM</sequence>
<reference key="1">
    <citation type="journal article" date="1997" name="J. Bacteriol.">
        <title>Cloning and characterization of two groESL operons of Rhodobacter sphaeroides: transcriptional regulation of the heat-induced groESL operon.</title>
        <authorList>
            <person name="Lee W.T."/>
            <person name="Terlesky K.C."/>
            <person name="Tabita F.R."/>
        </authorList>
    </citation>
    <scope>NUCLEOTIDE SEQUENCE [GENOMIC DNA]</scope>
    <source>
        <strain>HR</strain>
    </source>
</reference>
<reference key="2">
    <citation type="journal article" date="1990" name="FEMS Microbiol. Lett.">
        <title>Identification and characterization of a GroEL homologue in Rhodobacter sphaeroides.</title>
        <authorList>
            <person name="Watson G.M.F."/>
            <person name="Mann N.H."/>
            <person name="McDonald G.A."/>
            <person name="Dunbar B."/>
        </authorList>
    </citation>
    <scope>PROTEIN SEQUENCE OF 2-20</scope>
</reference>
<reference key="3">
    <citation type="journal article" date="1991" name="Biochemistry">
        <title>Purification and characterization of the chaperonin 10 and chaperonin 60 proteins from Rhodobacter sphaeroides.</title>
        <authorList>
            <person name="Terlesky K.C."/>
            <person name="Tabita F.R."/>
        </authorList>
    </citation>
    <scope>PROTEIN SEQUENCE OF 2-26</scope>
</reference>
<accession>P20110</accession>
<accession>Q59773</accession>
<gene>
    <name evidence="1" type="primary">groEL1</name>
    <name evidence="1" type="synonym">groL1</name>
</gene>
<evidence type="ECO:0000255" key="1">
    <source>
        <dbReference type="HAMAP-Rule" id="MF_00600"/>
    </source>
</evidence>
<evidence type="ECO:0000256" key="2">
    <source>
        <dbReference type="SAM" id="MobiDB-lite"/>
    </source>
</evidence>
<evidence type="ECO:0000269" key="3">
    <source>
    </source>
</evidence>
<evidence type="ECO:0000269" key="4">
    <source>
    </source>
</evidence>
<name>CH601_CERSP</name>
<organism>
    <name type="scientific">Cereibacter sphaeroides</name>
    <name type="common">Rhodobacter sphaeroides</name>
    <dbReference type="NCBI Taxonomy" id="1063"/>
    <lineage>
        <taxon>Bacteria</taxon>
        <taxon>Pseudomonadati</taxon>
        <taxon>Pseudomonadota</taxon>
        <taxon>Alphaproteobacteria</taxon>
        <taxon>Rhodobacterales</taxon>
        <taxon>Paracoccaceae</taxon>
        <taxon>Cereibacter</taxon>
    </lineage>
</organism>
<comment type="function">
    <text evidence="1">Together with its co-chaperonin GroES, plays an essential role in assisting protein folding. The GroEL-GroES system forms a nano-cage that allows encapsulation of the non-native substrate proteins and provides a physical environment optimized to promote and accelerate protein folding.</text>
</comment>
<comment type="catalytic activity">
    <reaction evidence="1">
        <text>ATP + H2O + a folded polypeptide = ADP + phosphate + an unfolded polypeptide.</text>
        <dbReference type="EC" id="5.6.1.7"/>
    </reaction>
</comment>
<comment type="subunit">
    <text evidence="1">Forms a cylinder of 14 subunits composed of two heptameric rings stacked back-to-back. Interacts with the co-chaperonin GroES.</text>
</comment>
<comment type="subcellular location">
    <subcellularLocation>
        <location evidence="1">Cytoplasm</location>
    </subcellularLocation>
</comment>
<comment type="induction">
    <text>By heat shock.</text>
</comment>
<comment type="miscellaneous">
    <text>This protein shows ATPase activity.</text>
</comment>
<comment type="similarity">
    <text evidence="1">Belongs to the chaperonin (HSP60) family.</text>
</comment>